<name>BGLR_MOUSE</name>
<proteinExistence type="evidence at protein level"/>
<dbReference type="EC" id="3.2.1.31"/>
<dbReference type="EMBL" id="J03047">
    <property type="protein sequence ID" value="AAA37696.1"/>
    <property type="molecule type" value="mRNA"/>
</dbReference>
<dbReference type="EMBL" id="J02836">
    <property type="protein sequence ID" value="AAA98623.1"/>
    <property type="molecule type" value="Genomic_DNA"/>
</dbReference>
<dbReference type="EMBL" id="M63836">
    <property type="protein sequence ID" value="AAA63309.1"/>
    <property type="molecule type" value="mRNA"/>
</dbReference>
<dbReference type="EMBL" id="M28540">
    <property type="protein sequence ID" value="AAA63307.1"/>
    <property type="molecule type" value="mRNA"/>
</dbReference>
<dbReference type="EMBL" id="M28541">
    <property type="protein sequence ID" value="AAA63308.1"/>
    <property type="molecule type" value="mRNA"/>
</dbReference>
<dbReference type="EMBL" id="M19279">
    <property type="protein sequence ID" value="AAA37697.1"/>
    <property type="molecule type" value="mRNA"/>
</dbReference>
<dbReference type="EMBL" id="AK136519">
    <property type="protein sequence ID" value="BAE23021.1"/>
    <property type="molecule type" value="mRNA"/>
</dbReference>
<dbReference type="EMBL" id="AK150048">
    <property type="protein sequence ID" value="BAE29265.1"/>
    <property type="molecule type" value="mRNA"/>
</dbReference>
<dbReference type="EMBL" id="AK159526">
    <property type="protein sequence ID" value="BAE35155.1"/>
    <property type="molecule type" value="mRNA"/>
</dbReference>
<dbReference type="EMBL" id="AK162436">
    <property type="protein sequence ID" value="BAE36917.1"/>
    <property type="molecule type" value="mRNA"/>
</dbReference>
<dbReference type="EMBL" id="AC161345">
    <property type="status" value="NOT_ANNOTATED_CDS"/>
    <property type="molecule type" value="Genomic_DNA"/>
</dbReference>
<dbReference type="EMBL" id="CH466529">
    <property type="protein sequence ID" value="EDL19485.1"/>
    <property type="molecule type" value="Genomic_DNA"/>
</dbReference>
<dbReference type="EMBL" id="BC071226">
    <property type="protein sequence ID" value="AAH71226.1"/>
    <property type="molecule type" value="mRNA"/>
</dbReference>
<dbReference type="CCDS" id="CCDS19705.1"/>
<dbReference type="PIR" id="A32576">
    <property type="entry name" value="A32576"/>
</dbReference>
<dbReference type="RefSeq" id="NP_034498.1">
    <property type="nucleotide sequence ID" value="NM_010368.2"/>
</dbReference>
<dbReference type="SMR" id="P12265"/>
<dbReference type="BioGRID" id="225218">
    <property type="interactions" value="20"/>
</dbReference>
<dbReference type="CORUM" id="P12265"/>
<dbReference type="FunCoup" id="P12265">
    <property type="interactions" value="1749"/>
</dbReference>
<dbReference type="STRING" id="10090.ENSMUSP00000026613"/>
<dbReference type="BindingDB" id="P12265"/>
<dbReference type="ChEMBL" id="CHEMBL4523185"/>
<dbReference type="CAZy" id="GH2">
    <property type="family name" value="Glycoside Hydrolase Family 2"/>
</dbReference>
<dbReference type="GlyCosmos" id="P12265">
    <property type="glycosylation" value="3 sites, No reported glycans"/>
</dbReference>
<dbReference type="GlyGen" id="P12265">
    <property type="glycosylation" value="4 sites, 3 N-linked glycans (3 sites)"/>
</dbReference>
<dbReference type="iPTMnet" id="P12265"/>
<dbReference type="PhosphoSitePlus" id="P12265"/>
<dbReference type="SwissPalm" id="P12265"/>
<dbReference type="jPOST" id="P12265"/>
<dbReference type="PaxDb" id="10090-ENSMUSP00000026613"/>
<dbReference type="PeptideAtlas" id="P12265"/>
<dbReference type="ProteomicsDB" id="273451"/>
<dbReference type="Pumba" id="P12265"/>
<dbReference type="Antibodypedia" id="14064">
    <property type="antibodies" value="408 antibodies from 36 providers"/>
</dbReference>
<dbReference type="DNASU" id="110006"/>
<dbReference type="Ensembl" id="ENSMUST00000026613.14">
    <property type="protein sequence ID" value="ENSMUSP00000026613.8"/>
    <property type="gene ID" value="ENSMUSG00000025534.18"/>
</dbReference>
<dbReference type="GeneID" id="110006"/>
<dbReference type="KEGG" id="mmu:110006"/>
<dbReference type="UCSC" id="uc008ztt.1">
    <property type="organism name" value="mouse"/>
</dbReference>
<dbReference type="AGR" id="MGI:95872"/>
<dbReference type="CTD" id="2990"/>
<dbReference type="MGI" id="MGI:95872">
    <property type="gene designation" value="Gusb"/>
</dbReference>
<dbReference type="VEuPathDB" id="HostDB:ENSMUSG00000025534"/>
<dbReference type="eggNOG" id="KOG2024">
    <property type="taxonomic scope" value="Eukaryota"/>
</dbReference>
<dbReference type="GeneTree" id="ENSGT00390000001752"/>
<dbReference type="HOGENOM" id="CLU_006501_6_1_1"/>
<dbReference type="InParanoid" id="P12265"/>
<dbReference type="OMA" id="IHDHVGW"/>
<dbReference type="OrthoDB" id="408532at2759"/>
<dbReference type="PhylomeDB" id="P12265"/>
<dbReference type="TreeFam" id="TF300685"/>
<dbReference type="BRENDA" id="3.2.1.31">
    <property type="organism ID" value="3474"/>
</dbReference>
<dbReference type="Reactome" id="R-MMU-2024096">
    <property type="pathway name" value="HS-GAG degradation"/>
</dbReference>
<dbReference type="Reactome" id="R-MMU-2160916">
    <property type="pathway name" value="Hyaluronan uptake and degradation"/>
</dbReference>
<dbReference type="Reactome" id="R-MMU-6798695">
    <property type="pathway name" value="Neutrophil degranulation"/>
</dbReference>
<dbReference type="BioGRID-ORCS" id="110006">
    <property type="hits" value="2 hits in 82 CRISPR screens"/>
</dbReference>
<dbReference type="ChiTaRS" id="Gusb">
    <property type="organism name" value="mouse"/>
</dbReference>
<dbReference type="PRO" id="PR:P12265"/>
<dbReference type="Proteomes" id="UP000000589">
    <property type="component" value="Chromosome 5"/>
</dbReference>
<dbReference type="RNAct" id="P12265">
    <property type="molecule type" value="protein"/>
</dbReference>
<dbReference type="Bgee" id="ENSMUSG00000025534">
    <property type="expression patterns" value="Expressed in stroma of bone marrow and 258 other cell types or tissues"/>
</dbReference>
<dbReference type="ExpressionAtlas" id="P12265">
    <property type="expression patterns" value="baseline and differential"/>
</dbReference>
<dbReference type="GO" id="GO:0005783">
    <property type="term" value="C:endoplasmic reticulum"/>
    <property type="evidence" value="ECO:0007669"/>
    <property type="project" value="UniProtKB-SubCell"/>
</dbReference>
<dbReference type="GO" id="GO:0005615">
    <property type="term" value="C:extracellular space"/>
    <property type="evidence" value="ECO:0000314"/>
    <property type="project" value="MGI"/>
</dbReference>
<dbReference type="GO" id="GO:0043202">
    <property type="term" value="C:lysosomal lumen"/>
    <property type="evidence" value="ECO:0000314"/>
    <property type="project" value="MGI"/>
</dbReference>
<dbReference type="GO" id="GO:0005764">
    <property type="term" value="C:lysosome"/>
    <property type="evidence" value="ECO:0000314"/>
    <property type="project" value="MGI"/>
</dbReference>
<dbReference type="GO" id="GO:0004566">
    <property type="term" value="F:beta-glucuronidase activity"/>
    <property type="evidence" value="ECO:0000314"/>
    <property type="project" value="MGI"/>
</dbReference>
<dbReference type="GO" id="GO:0016787">
    <property type="term" value="F:hydrolase activity"/>
    <property type="evidence" value="ECO:0000314"/>
    <property type="project" value="MGI"/>
</dbReference>
<dbReference type="GO" id="GO:0019904">
    <property type="term" value="F:protein domain specific binding"/>
    <property type="evidence" value="ECO:0007669"/>
    <property type="project" value="Ensembl"/>
</dbReference>
<dbReference type="GO" id="GO:0005102">
    <property type="term" value="F:signaling receptor binding"/>
    <property type="evidence" value="ECO:0007669"/>
    <property type="project" value="Ensembl"/>
</dbReference>
<dbReference type="GO" id="GO:0005975">
    <property type="term" value="P:carbohydrate metabolic process"/>
    <property type="evidence" value="ECO:0000314"/>
    <property type="project" value="MGI"/>
</dbReference>
<dbReference type="GO" id="GO:0030207">
    <property type="term" value="P:chondroitin sulfate proteoglycan catabolic process"/>
    <property type="evidence" value="ECO:0000315"/>
    <property type="project" value="MGI"/>
</dbReference>
<dbReference type="GO" id="GO:0030200">
    <property type="term" value="P:heparan sulfate proteoglycan catabolic process"/>
    <property type="evidence" value="ECO:0000315"/>
    <property type="project" value="MGI"/>
</dbReference>
<dbReference type="GO" id="GO:0030214">
    <property type="term" value="P:hyaluronan catabolic process"/>
    <property type="evidence" value="ECO:0000315"/>
    <property type="project" value="MGI"/>
</dbReference>
<dbReference type="FunFam" id="2.60.120.260:FF:000027">
    <property type="entry name" value="Beta-glucuronidase"/>
    <property type="match status" value="1"/>
</dbReference>
<dbReference type="FunFam" id="2.60.40.10:FF:000628">
    <property type="entry name" value="Beta-glucuronidase"/>
    <property type="match status" value="1"/>
</dbReference>
<dbReference type="FunFam" id="3.20.20.80:FF:000029">
    <property type="entry name" value="Beta-glucuronidase"/>
    <property type="match status" value="1"/>
</dbReference>
<dbReference type="Gene3D" id="2.60.120.260">
    <property type="entry name" value="Galactose-binding domain-like"/>
    <property type="match status" value="1"/>
</dbReference>
<dbReference type="Gene3D" id="3.20.20.80">
    <property type="entry name" value="Glycosidases"/>
    <property type="match status" value="1"/>
</dbReference>
<dbReference type="Gene3D" id="2.60.40.10">
    <property type="entry name" value="Immunoglobulins"/>
    <property type="match status" value="1"/>
</dbReference>
<dbReference type="InterPro" id="IPR036156">
    <property type="entry name" value="Beta-gal/glucu_dom_sf"/>
</dbReference>
<dbReference type="InterPro" id="IPR008979">
    <property type="entry name" value="Galactose-bd-like_sf"/>
</dbReference>
<dbReference type="InterPro" id="IPR006101">
    <property type="entry name" value="Glyco_hydro_2"/>
</dbReference>
<dbReference type="InterPro" id="IPR023232">
    <property type="entry name" value="Glyco_hydro_2_AS"/>
</dbReference>
<dbReference type="InterPro" id="IPR006103">
    <property type="entry name" value="Glyco_hydro_2_cat"/>
</dbReference>
<dbReference type="InterPro" id="IPR023230">
    <property type="entry name" value="Glyco_hydro_2_CS"/>
</dbReference>
<dbReference type="InterPro" id="IPR006102">
    <property type="entry name" value="Glyco_hydro_2_Ig-like"/>
</dbReference>
<dbReference type="InterPro" id="IPR006104">
    <property type="entry name" value="Glyco_hydro_2_N"/>
</dbReference>
<dbReference type="InterPro" id="IPR017853">
    <property type="entry name" value="Glycoside_hydrolase_SF"/>
</dbReference>
<dbReference type="InterPro" id="IPR013783">
    <property type="entry name" value="Ig-like_fold"/>
</dbReference>
<dbReference type="NCBIfam" id="NF007538">
    <property type="entry name" value="PRK10150.1"/>
    <property type="match status" value="1"/>
</dbReference>
<dbReference type="PANTHER" id="PTHR10066">
    <property type="entry name" value="BETA-GLUCURONIDASE"/>
    <property type="match status" value="1"/>
</dbReference>
<dbReference type="PANTHER" id="PTHR10066:SF67">
    <property type="entry name" value="BETA-GLUCURONIDASE"/>
    <property type="match status" value="1"/>
</dbReference>
<dbReference type="Pfam" id="PF00703">
    <property type="entry name" value="Glyco_hydro_2"/>
    <property type="match status" value="1"/>
</dbReference>
<dbReference type="Pfam" id="PF02836">
    <property type="entry name" value="Glyco_hydro_2_C"/>
    <property type="match status" value="1"/>
</dbReference>
<dbReference type="Pfam" id="PF02837">
    <property type="entry name" value="Glyco_hydro_2_N"/>
    <property type="match status" value="1"/>
</dbReference>
<dbReference type="PRINTS" id="PR00132">
    <property type="entry name" value="GLHYDRLASE2"/>
</dbReference>
<dbReference type="SUPFAM" id="SSF51445">
    <property type="entry name" value="(Trans)glycosidases"/>
    <property type="match status" value="1"/>
</dbReference>
<dbReference type="SUPFAM" id="SSF49303">
    <property type="entry name" value="beta-Galactosidase/glucuronidase domain"/>
    <property type="match status" value="1"/>
</dbReference>
<dbReference type="SUPFAM" id="SSF49785">
    <property type="entry name" value="Galactose-binding domain-like"/>
    <property type="match status" value="1"/>
</dbReference>
<dbReference type="PROSITE" id="PS00719">
    <property type="entry name" value="GLYCOSYL_HYDROL_F2_1"/>
    <property type="match status" value="1"/>
</dbReference>
<dbReference type="PROSITE" id="PS00608">
    <property type="entry name" value="GLYCOSYL_HYDROL_F2_2"/>
    <property type="match status" value="1"/>
</dbReference>
<evidence type="ECO:0000250" key="1"/>
<evidence type="ECO:0000255" key="2"/>
<evidence type="ECO:0000269" key="3">
    <source>
    </source>
</evidence>
<evidence type="ECO:0000305" key="4"/>
<accession>P12265</accession>
<accession>Q61601</accession>
<accession>Q64473</accession>
<accession>Q64474</accession>
<accession>Q6IR10</accession>
<comment type="function">
    <text>Plays an important role in the degradation of dermatan and keratan sulfates.</text>
</comment>
<comment type="catalytic activity">
    <reaction>
        <text>a beta-D-glucuronoside + H2O = D-glucuronate + an alcohol</text>
        <dbReference type="Rhea" id="RHEA:17633"/>
        <dbReference type="ChEBI" id="CHEBI:15377"/>
        <dbReference type="ChEBI" id="CHEBI:30879"/>
        <dbReference type="ChEBI" id="CHEBI:58720"/>
        <dbReference type="ChEBI" id="CHEBI:83411"/>
        <dbReference type="EC" id="3.2.1.31"/>
    </reaction>
</comment>
<comment type="activity regulation">
    <text evidence="1">Inhibited by L-aspartic acid.</text>
</comment>
<comment type="subunit">
    <text>Homotetramer.</text>
</comment>
<comment type="subcellular location">
    <subcellularLocation>
        <location evidence="3">Lysosome</location>
    </subcellularLocation>
    <subcellularLocation>
        <location evidence="3">Endoplasmic reticulum</location>
    </subcellularLocation>
    <text>A small proportion is found in the endoplasmic reticulum.</text>
</comment>
<comment type="similarity">
    <text evidence="4">Belongs to the glycosyl hydrolase 2 family.</text>
</comment>
<sequence length="648" mass="74195">MSLKWSACWVALGQLLCSCALALKGGMLFPKESPSRELKALDGLWHFRADLSNNRLQGFEQQWYRQPLRESGPVLDMPVPSSFNDITQEAALRDFIGWVWYEREAILPRRWTQDTDMRVVLRINSAHYYAVVWVNGIHVVEHEGGHLPFEADISKLVQSGPLTTCRITIAINNTLTPHTLPPGTIVYKTDTSMYPKGYFVQDTSFDFFNYAGLHRSVVLYTTPTTYIDDITVITNVEQDIGLVTYWISVQGSEHFQLEVQLLDEGGKVVAHGTGNQGQLQVPSANLWWPYLMHEHPAYMYSLEVKVTTTESVTDYYTLPIGIRTVAVTKSKFLINGKPFYFQGVNKHEDSDIRGKGFDWPLLVKDFNLLRWLGANSFRTSHYPYSEEVLQLCDRYGIVVIDECPGVGIVLPQSFGNESLRHHLEVMEELVRRDKNHPAVVMWSVANEPSSALKPAAYYFKTLITHTKALDLTRPVTFVSNAKYDADLGAPYVDVICVNSYFSWYHDYGHLEVIQPQLNSQFENWYKTHQKPIIQSEYGADAIPGIHEDPPRMFSEEYQKAVLENYHSVLDQKRKEYVVGELIWNFADFMTNQSPLRVIGNKKGIFTRQRQPKTSAFILRERYWRIANETGGHGSGPRTQCFGSRPFTF</sequence>
<organism>
    <name type="scientific">Mus musculus</name>
    <name type="common">Mouse</name>
    <dbReference type="NCBI Taxonomy" id="10090"/>
    <lineage>
        <taxon>Eukaryota</taxon>
        <taxon>Metazoa</taxon>
        <taxon>Chordata</taxon>
        <taxon>Craniata</taxon>
        <taxon>Vertebrata</taxon>
        <taxon>Euteleostomi</taxon>
        <taxon>Mammalia</taxon>
        <taxon>Eutheria</taxon>
        <taxon>Euarchontoglires</taxon>
        <taxon>Glires</taxon>
        <taxon>Rodentia</taxon>
        <taxon>Myomorpha</taxon>
        <taxon>Muroidea</taxon>
        <taxon>Muridae</taxon>
        <taxon>Murinae</taxon>
        <taxon>Mus</taxon>
        <taxon>Mus</taxon>
    </lineage>
</organism>
<feature type="signal peptide">
    <location>
        <begin position="1"/>
        <end position="22"/>
    </location>
</feature>
<feature type="chain" id="PRO_0000012162" description="Beta-glucuronidase">
    <location>
        <begin position="23"/>
        <end position="648"/>
    </location>
</feature>
<feature type="active site" description="Proton donor" evidence="1">
    <location>
        <position position="447"/>
    </location>
</feature>
<feature type="glycosylation site" description="N-linked (GlcNAc...) asparagine" evidence="2">
    <location>
        <position position="172"/>
    </location>
</feature>
<feature type="glycosylation site" description="N-linked (GlcNAc...) asparagine" evidence="2">
    <location>
        <position position="416"/>
    </location>
</feature>
<feature type="glycosylation site" description="N-linked (GlcNAc...) asparagine" evidence="2">
    <location>
        <position position="627"/>
    </location>
</feature>
<feature type="sequence variant" description="In strain: C3H/HeJ.">
    <original>T</original>
    <variation>I</variation>
    <location>
        <position position="87"/>
    </location>
</feature>
<feature type="sequence variant" description="In allele GUS-SA.">
    <original>I</original>
    <variation>T</variation>
    <location>
        <position position="233"/>
    </location>
</feature>
<feature type="sequence variant" description="In allele GUS-SA.">
    <original>E</original>
    <variation>K</variation>
    <location>
        <position position="428"/>
    </location>
</feature>
<feature type="sequence variant" description="In allele GUS-SA.">
    <original>F</original>
    <variation>L</variation>
    <location>
        <position position="616"/>
    </location>
</feature>
<feature type="sequence variant" description="In allele W26; reduced retention in the endoplasmic reticulum." evidence="3">
    <original>G</original>
    <variation>R</variation>
    <location>
        <position position="642"/>
    </location>
</feature>
<feature type="sequence conflict" description="In Ref. 2; AAA37696, 3; AAA98623, 4; AAA63309 and 5; AAA37697." evidence="4" ref="2 3 4 5">
    <original>G</original>
    <variation>D</variation>
    <location>
        <position position="265"/>
    </location>
</feature>
<feature type="sequence conflict" description="In Ref. 2; AAA37696, 3; AAA98623 and 5; AAA37697." evidence="4" ref="2 3 5">
    <original>I</original>
    <variation>V</variation>
    <location>
        <position position="320"/>
    </location>
</feature>
<reference key="1">
    <citation type="journal article" date="1987" name="Genomics">
        <title>DNA sequence variation within the beta-glucuronidase gene complex among inbred strains of mice.</title>
        <authorList>
            <person name="Gallagher P.M."/>
            <person name="D'Amore M.A."/>
            <person name="Lund S.D."/>
            <person name="Elliott R.W."/>
            <person name="Pazik J."/>
            <person name="Hohman C."/>
            <person name="Korfhagen T.R."/>
            <person name="Ganschow R.E."/>
        </authorList>
    </citation>
    <scope>NUCLEOTIDE SEQUENCE</scope>
</reference>
<reference key="2">
    <citation type="journal article" date="1988" name="Genomics">
        <title>The complete nucleotide sequence of murine beta-glucuronidase mRNA and its deduced polypeptide.</title>
        <authorList>
            <person name="Gallagher P.M."/>
            <person name="D'Amore M.A."/>
            <person name="Lund S.D."/>
            <person name="Ganschow R.E."/>
        </authorList>
    </citation>
    <scope>NUCLEOTIDE SEQUENCE [MRNA]</scope>
</reference>
<reference key="3">
    <citation type="journal article" date="1988" name="Biochemistry">
        <title>Complete sequence and organization of the murine beta-glucuronidase gene.</title>
        <authorList>
            <person name="D'Amore M.A."/>
            <person name="Gallagher P.M."/>
            <person name="Korfhagen T.R."/>
            <person name="Ganschow R.E."/>
        </authorList>
    </citation>
    <scope>NUCLEOTIDE SEQUENCE [GENOMIC DNA]</scope>
</reference>
<reference key="4">
    <citation type="journal article" date="1989" name="Mol. Cell. Biol.">
        <title>DNA determinants of structural and regulatory variation within the murine beta-glucuronidase gene complex.</title>
        <authorList>
            <person name="Wawrzyniak C.J."/>
            <person name="Gallagher P.M."/>
            <person name="D'Amore M.A."/>
            <person name="Carter J.E."/>
            <person name="Lund S.D."/>
            <person name="Rinchik E.M."/>
            <person name="Ganschow R.E."/>
        </authorList>
    </citation>
    <scope>NUCLEOTIDE SEQUENCE [MRNA]</scope>
    <source>
        <strain>C3H/HeJ</strain>
        <strain>YBR</strain>
        <tissue>Sperm</tissue>
    </source>
</reference>
<reference key="5">
    <citation type="journal article" date="1988" name="Mol. Cell. Biol.">
        <title>Genomic organization and sequence of the Gus-s alpha allele of the murine beta-glucuronidase gene.</title>
        <authorList>
            <person name="Funkenstein B."/>
            <person name="Leary S.L."/>
            <person name="Stein J.C."/>
            <person name="Catterall J.F."/>
        </authorList>
    </citation>
    <scope>NUCLEOTIDE SEQUENCE [MRNA]</scope>
</reference>
<reference key="6">
    <citation type="journal article" date="2005" name="Science">
        <title>The transcriptional landscape of the mammalian genome.</title>
        <authorList>
            <person name="Carninci P."/>
            <person name="Kasukawa T."/>
            <person name="Katayama S."/>
            <person name="Gough J."/>
            <person name="Frith M.C."/>
            <person name="Maeda N."/>
            <person name="Oyama R."/>
            <person name="Ravasi T."/>
            <person name="Lenhard B."/>
            <person name="Wells C."/>
            <person name="Kodzius R."/>
            <person name="Shimokawa K."/>
            <person name="Bajic V.B."/>
            <person name="Brenner S.E."/>
            <person name="Batalov S."/>
            <person name="Forrest A.R."/>
            <person name="Zavolan M."/>
            <person name="Davis M.J."/>
            <person name="Wilming L.G."/>
            <person name="Aidinis V."/>
            <person name="Allen J.E."/>
            <person name="Ambesi-Impiombato A."/>
            <person name="Apweiler R."/>
            <person name="Aturaliya R.N."/>
            <person name="Bailey T.L."/>
            <person name="Bansal M."/>
            <person name="Baxter L."/>
            <person name="Beisel K.W."/>
            <person name="Bersano T."/>
            <person name="Bono H."/>
            <person name="Chalk A.M."/>
            <person name="Chiu K.P."/>
            <person name="Choudhary V."/>
            <person name="Christoffels A."/>
            <person name="Clutterbuck D.R."/>
            <person name="Crowe M.L."/>
            <person name="Dalla E."/>
            <person name="Dalrymple B.P."/>
            <person name="de Bono B."/>
            <person name="Della Gatta G."/>
            <person name="di Bernardo D."/>
            <person name="Down T."/>
            <person name="Engstrom P."/>
            <person name="Fagiolini M."/>
            <person name="Faulkner G."/>
            <person name="Fletcher C.F."/>
            <person name="Fukushima T."/>
            <person name="Furuno M."/>
            <person name="Futaki S."/>
            <person name="Gariboldi M."/>
            <person name="Georgii-Hemming P."/>
            <person name="Gingeras T.R."/>
            <person name="Gojobori T."/>
            <person name="Green R.E."/>
            <person name="Gustincich S."/>
            <person name="Harbers M."/>
            <person name="Hayashi Y."/>
            <person name="Hensch T.K."/>
            <person name="Hirokawa N."/>
            <person name="Hill D."/>
            <person name="Huminiecki L."/>
            <person name="Iacono M."/>
            <person name="Ikeo K."/>
            <person name="Iwama A."/>
            <person name="Ishikawa T."/>
            <person name="Jakt M."/>
            <person name="Kanapin A."/>
            <person name="Katoh M."/>
            <person name="Kawasawa Y."/>
            <person name="Kelso J."/>
            <person name="Kitamura H."/>
            <person name="Kitano H."/>
            <person name="Kollias G."/>
            <person name="Krishnan S.P."/>
            <person name="Kruger A."/>
            <person name="Kummerfeld S.K."/>
            <person name="Kurochkin I.V."/>
            <person name="Lareau L.F."/>
            <person name="Lazarevic D."/>
            <person name="Lipovich L."/>
            <person name="Liu J."/>
            <person name="Liuni S."/>
            <person name="McWilliam S."/>
            <person name="Madan Babu M."/>
            <person name="Madera M."/>
            <person name="Marchionni L."/>
            <person name="Matsuda H."/>
            <person name="Matsuzawa S."/>
            <person name="Miki H."/>
            <person name="Mignone F."/>
            <person name="Miyake S."/>
            <person name="Morris K."/>
            <person name="Mottagui-Tabar S."/>
            <person name="Mulder N."/>
            <person name="Nakano N."/>
            <person name="Nakauchi H."/>
            <person name="Ng P."/>
            <person name="Nilsson R."/>
            <person name="Nishiguchi S."/>
            <person name="Nishikawa S."/>
            <person name="Nori F."/>
            <person name="Ohara O."/>
            <person name="Okazaki Y."/>
            <person name="Orlando V."/>
            <person name="Pang K.C."/>
            <person name="Pavan W.J."/>
            <person name="Pavesi G."/>
            <person name="Pesole G."/>
            <person name="Petrovsky N."/>
            <person name="Piazza S."/>
            <person name="Reed J."/>
            <person name="Reid J.F."/>
            <person name="Ring B.Z."/>
            <person name="Ringwald M."/>
            <person name="Rost B."/>
            <person name="Ruan Y."/>
            <person name="Salzberg S.L."/>
            <person name="Sandelin A."/>
            <person name="Schneider C."/>
            <person name="Schoenbach C."/>
            <person name="Sekiguchi K."/>
            <person name="Semple C.A."/>
            <person name="Seno S."/>
            <person name="Sessa L."/>
            <person name="Sheng Y."/>
            <person name="Shibata Y."/>
            <person name="Shimada H."/>
            <person name="Shimada K."/>
            <person name="Silva D."/>
            <person name="Sinclair B."/>
            <person name="Sperling S."/>
            <person name="Stupka E."/>
            <person name="Sugiura K."/>
            <person name="Sultana R."/>
            <person name="Takenaka Y."/>
            <person name="Taki K."/>
            <person name="Tammoja K."/>
            <person name="Tan S.L."/>
            <person name="Tang S."/>
            <person name="Taylor M.S."/>
            <person name="Tegner J."/>
            <person name="Teichmann S.A."/>
            <person name="Ueda H.R."/>
            <person name="van Nimwegen E."/>
            <person name="Verardo R."/>
            <person name="Wei C.L."/>
            <person name="Yagi K."/>
            <person name="Yamanishi H."/>
            <person name="Zabarovsky E."/>
            <person name="Zhu S."/>
            <person name="Zimmer A."/>
            <person name="Hide W."/>
            <person name="Bult C."/>
            <person name="Grimmond S.M."/>
            <person name="Teasdale R.D."/>
            <person name="Liu E.T."/>
            <person name="Brusic V."/>
            <person name="Quackenbush J."/>
            <person name="Wahlestedt C."/>
            <person name="Mattick J.S."/>
            <person name="Hume D.A."/>
            <person name="Kai C."/>
            <person name="Sasaki D."/>
            <person name="Tomaru Y."/>
            <person name="Fukuda S."/>
            <person name="Kanamori-Katayama M."/>
            <person name="Suzuki M."/>
            <person name="Aoki J."/>
            <person name="Arakawa T."/>
            <person name="Iida J."/>
            <person name="Imamura K."/>
            <person name="Itoh M."/>
            <person name="Kato T."/>
            <person name="Kawaji H."/>
            <person name="Kawagashira N."/>
            <person name="Kawashima T."/>
            <person name="Kojima M."/>
            <person name="Kondo S."/>
            <person name="Konno H."/>
            <person name="Nakano K."/>
            <person name="Ninomiya N."/>
            <person name="Nishio T."/>
            <person name="Okada M."/>
            <person name="Plessy C."/>
            <person name="Shibata K."/>
            <person name="Shiraki T."/>
            <person name="Suzuki S."/>
            <person name="Tagami M."/>
            <person name="Waki K."/>
            <person name="Watahiki A."/>
            <person name="Okamura-Oho Y."/>
            <person name="Suzuki H."/>
            <person name="Kawai J."/>
            <person name="Hayashizaki Y."/>
        </authorList>
    </citation>
    <scope>NUCLEOTIDE SEQUENCE [LARGE SCALE MRNA]</scope>
    <source>
        <strain>C57BL/6J</strain>
        <tissue>Bone marrow</tissue>
        <tissue>Cecum</tissue>
    </source>
</reference>
<reference key="7">
    <citation type="journal article" date="2009" name="PLoS Biol.">
        <title>Lineage-specific biology revealed by a finished genome assembly of the mouse.</title>
        <authorList>
            <person name="Church D.M."/>
            <person name="Goodstadt L."/>
            <person name="Hillier L.W."/>
            <person name="Zody M.C."/>
            <person name="Goldstein S."/>
            <person name="She X."/>
            <person name="Bult C.J."/>
            <person name="Agarwala R."/>
            <person name="Cherry J.L."/>
            <person name="DiCuccio M."/>
            <person name="Hlavina W."/>
            <person name="Kapustin Y."/>
            <person name="Meric P."/>
            <person name="Maglott D."/>
            <person name="Birtle Z."/>
            <person name="Marques A.C."/>
            <person name="Graves T."/>
            <person name="Zhou S."/>
            <person name="Teague B."/>
            <person name="Potamousis K."/>
            <person name="Churas C."/>
            <person name="Place M."/>
            <person name="Herschleb J."/>
            <person name="Runnheim R."/>
            <person name="Forrest D."/>
            <person name="Amos-Landgraf J."/>
            <person name="Schwartz D.C."/>
            <person name="Cheng Z."/>
            <person name="Lindblad-Toh K."/>
            <person name="Eichler E.E."/>
            <person name="Ponting C.P."/>
        </authorList>
    </citation>
    <scope>NUCLEOTIDE SEQUENCE [LARGE SCALE GENOMIC DNA]</scope>
    <source>
        <strain>C57BL/6J</strain>
    </source>
</reference>
<reference key="8">
    <citation type="submission" date="2005-07" db="EMBL/GenBank/DDBJ databases">
        <authorList>
            <person name="Mural R.J."/>
            <person name="Adams M.D."/>
            <person name="Myers E.W."/>
            <person name="Smith H.O."/>
            <person name="Venter J.C."/>
        </authorList>
    </citation>
    <scope>NUCLEOTIDE SEQUENCE [LARGE SCALE GENOMIC DNA]</scope>
</reference>
<reference key="9">
    <citation type="journal article" date="2004" name="Genome Res.">
        <title>The status, quality, and expansion of the NIH full-length cDNA project: the Mammalian Gene Collection (MGC).</title>
        <authorList>
            <consortium name="The MGC Project Team"/>
        </authorList>
    </citation>
    <scope>NUCLEOTIDE SEQUENCE [LARGE SCALE MRNA]</scope>
    <source>
        <strain>NMRI</strain>
        <tissue>Mammary tumor</tissue>
    </source>
</reference>
<reference key="10">
    <citation type="journal article" date="1990" name="J. Biol. Chem.">
        <title>The propeptide of beta-glucuronidase. Further evidence of its involvement in compartmentalization of beta-glucuronidase and sequence similarity with portions of the reactive site region of the serpin superfamily.</title>
        <authorList>
            <person name="Li H."/>
            <person name="Takeuchi K.H."/>
            <person name="Manly K."/>
            <person name="Chapman V."/>
            <person name="Swank R.T."/>
        </authorList>
    </citation>
    <scope>NUCLEOTIDE SEQUENCE OF 593-648</scope>
    <scope>VARIANT ARG-642</scope>
    <scope>SUBCELLULAR LOCATION</scope>
</reference>
<reference key="11">
    <citation type="journal article" date="2010" name="Cell">
        <title>A tissue-specific atlas of mouse protein phosphorylation and expression.</title>
        <authorList>
            <person name="Huttlin E.L."/>
            <person name="Jedrychowski M.P."/>
            <person name="Elias J.E."/>
            <person name="Goswami T."/>
            <person name="Rad R."/>
            <person name="Beausoleil S.A."/>
            <person name="Villen J."/>
            <person name="Haas W."/>
            <person name="Sowa M.E."/>
            <person name="Gygi S.P."/>
        </authorList>
    </citation>
    <scope>IDENTIFICATION BY MASS SPECTROMETRY [LARGE SCALE ANALYSIS]</scope>
    <source>
        <tissue>Kidney</tissue>
        <tissue>Liver</tissue>
        <tissue>Lung</tissue>
        <tissue>Spleen</tissue>
        <tissue>Testis</tissue>
    </source>
</reference>
<gene>
    <name type="primary">Gusb</name>
    <name type="synonym">Gus</name>
    <name type="synonym">Gus-s</name>
</gene>
<keyword id="KW-0256">Endoplasmic reticulum</keyword>
<keyword id="KW-0325">Glycoprotein</keyword>
<keyword id="KW-0326">Glycosidase</keyword>
<keyword id="KW-0378">Hydrolase</keyword>
<keyword id="KW-0458">Lysosome</keyword>
<keyword id="KW-1185">Reference proteome</keyword>
<keyword id="KW-0732">Signal</keyword>
<protein>
    <recommendedName>
        <fullName>Beta-glucuronidase</fullName>
        <ecNumber>3.2.1.31</ecNumber>
    </recommendedName>
</protein>